<name>ISPD_YERPB</name>
<reference key="1">
    <citation type="submission" date="2008-04" db="EMBL/GenBank/DDBJ databases">
        <title>Complete sequence of Yersinia pseudotuberculosis PB1/+.</title>
        <authorList>
            <person name="Copeland A."/>
            <person name="Lucas S."/>
            <person name="Lapidus A."/>
            <person name="Glavina del Rio T."/>
            <person name="Dalin E."/>
            <person name="Tice H."/>
            <person name="Bruce D."/>
            <person name="Goodwin L."/>
            <person name="Pitluck S."/>
            <person name="Munk A.C."/>
            <person name="Brettin T."/>
            <person name="Detter J.C."/>
            <person name="Han C."/>
            <person name="Tapia R."/>
            <person name="Schmutz J."/>
            <person name="Larimer F."/>
            <person name="Land M."/>
            <person name="Hauser L."/>
            <person name="Challacombe J.F."/>
            <person name="Green L."/>
            <person name="Lindler L.E."/>
            <person name="Nikolich M.P."/>
            <person name="Richardson P."/>
        </authorList>
    </citation>
    <scope>NUCLEOTIDE SEQUENCE [LARGE SCALE GENOMIC DNA]</scope>
    <source>
        <strain>PB1/+</strain>
    </source>
</reference>
<sequence length="241" mass="26373">MSNFAVSLPEVIAVLPAAGIGSRMLADCPKQYLTVGGKTIIEHAIFSLLHHPRIQRVIVVIHPQDTQFSRLSVAQDPRISTVYGGDQRANSVMAGLQLAGQAEWVLVHDAARPCLHLDDLSRLLSITECSQVGGILAAPVRDTMKRAEPGIQAIAHTVDRQDLWHALTPQLFPLELLKLCLSRALREGVAVTDEASALEHCGYHPILVTGRSDNIKVTRPEDLALAEFYLTQRQSLNNDSL</sequence>
<feature type="chain" id="PRO_1000094363" description="2-C-methyl-D-erythritol 4-phosphate cytidylyltransferase">
    <location>
        <begin position="1"/>
        <end position="241"/>
    </location>
</feature>
<feature type="site" description="Transition state stabilizer" evidence="1">
    <location>
        <position position="23"/>
    </location>
</feature>
<feature type="site" description="Transition state stabilizer" evidence="1">
    <location>
        <position position="30"/>
    </location>
</feature>
<feature type="site" description="Positions MEP for the nucleophilic attack" evidence="1">
    <location>
        <position position="160"/>
    </location>
</feature>
<feature type="site" description="Positions MEP for the nucleophilic attack" evidence="1">
    <location>
        <position position="216"/>
    </location>
</feature>
<keyword id="KW-0414">Isoprene biosynthesis</keyword>
<keyword id="KW-0548">Nucleotidyltransferase</keyword>
<keyword id="KW-0808">Transferase</keyword>
<accession>B2K577</accession>
<organism>
    <name type="scientific">Yersinia pseudotuberculosis serotype IB (strain PB1/+)</name>
    <dbReference type="NCBI Taxonomy" id="502801"/>
    <lineage>
        <taxon>Bacteria</taxon>
        <taxon>Pseudomonadati</taxon>
        <taxon>Pseudomonadota</taxon>
        <taxon>Gammaproteobacteria</taxon>
        <taxon>Enterobacterales</taxon>
        <taxon>Yersiniaceae</taxon>
        <taxon>Yersinia</taxon>
    </lineage>
</organism>
<protein>
    <recommendedName>
        <fullName evidence="1">2-C-methyl-D-erythritol 4-phosphate cytidylyltransferase</fullName>
        <ecNumber evidence="1">2.7.7.60</ecNumber>
    </recommendedName>
    <alternativeName>
        <fullName evidence="1">4-diphosphocytidyl-2C-methyl-D-erythritol synthase</fullName>
    </alternativeName>
    <alternativeName>
        <fullName evidence="1">MEP cytidylyltransferase</fullName>
        <shortName evidence="1">MCT</shortName>
    </alternativeName>
</protein>
<comment type="function">
    <text evidence="1">Catalyzes the formation of 4-diphosphocytidyl-2-C-methyl-D-erythritol from CTP and 2-C-methyl-D-erythritol 4-phosphate (MEP).</text>
</comment>
<comment type="catalytic activity">
    <reaction evidence="1">
        <text>2-C-methyl-D-erythritol 4-phosphate + CTP + H(+) = 4-CDP-2-C-methyl-D-erythritol + diphosphate</text>
        <dbReference type="Rhea" id="RHEA:13429"/>
        <dbReference type="ChEBI" id="CHEBI:15378"/>
        <dbReference type="ChEBI" id="CHEBI:33019"/>
        <dbReference type="ChEBI" id="CHEBI:37563"/>
        <dbReference type="ChEBI" id="CHEBI:57823"/>
        <dbReference type="ChEBI" id="CHEBI:58262"/>
        <dbReference type="EC" id="2.7.7.60"/>
    </reaction>
</comment>
<comment type="pathway">
    <text evidence="1">Isoprenoid biosynthesis; isopentenyl diphosphate biosynthesis via DXP pathway; isopentenyl diphosphate from 1-deoxy-D-xylulose 5-phosphate: step 2/6.</text>
</comment>
<comment type="subunit">
    <text evidence="1">Homodimer.</text>
</comment>
<comment type="similarity">
    <text evidence="1">Belongs to the IspD/TarI cytidylyltransferase family. IspD subfamily.</text>
</comment>
<dbReference type="EC" id="2.7.7.60" evidence="1"/>
<dbReference type="EMBL" id="CP001048">
    <property type="protein sequence ID" value="ACC87788.1"/>
    <property type="molecule type" value="Genomic_DNA"/>
</dbReference>
<dbReference type="RefSeq" id="WP_012105643.1">
    <property type="nucleotide sequence ID" value="NZ_CP009780.1"/>
</dbReference>
<dbReference type="SMR" id="B2K577"/>
<dbReference type="GeneID" id="49787222"/>
<dbReference type="KEGG" id="ypb:YPTS_0804"/>
<dbReference type="PATRIC" id="fig|502801.10.peg.135"/>
<dbReference type="UniPathway" id="UPA00056">
    <property type="reaction ID" value="UER00093"/>
</dbReference>
<dbReference type="GO" id="GO:0050518">
    <property type="term" value="F:2-C-methyl-D-erythritol 4-phosphate cytidylyltransferase activity"/>
    <property type="evidence" value="ECO:0007669"/>
    <property type="project" value="UniProtKB-UniRule"/>
</dbReference>
<dbReference type="GO" id="GO:0019288">
    <property type="term" value="P:isopentenyl diphosphate biosynthetic process, methylerythritol 4-phosphate pathway"/>
    <property type="evidence" value="ECO:0007669"/>
    <property type="project" value="UniProtKB-UniRule"/>
</dbReference>
<dbReference type="CDD" id="cd02516">
    <property type="entry name" value="CDP-ME_synthetase"/>
    <property type="match status" value="1"/>
</dbReference>
<dbReference type="FunFam" id="3.90.550.10:FF:000003">
    <property type="entry name" value="2-C-methyl-D-erythritol 4-phosphate cytidylyltransferase"/>
    <property type="match status" value="1"/>
</dbReference>
<dbReference type="Gene3D" id="3.90.550.10">
    <property type="entry name" value="Spore Coat Polysaccharide Biosynthesis Protein SpsA, Chain A"/>
    <property type="match status" value="1"/>
</dbReference>
<dbReference type="HAMAP" id="MF_00108">
    <property type="entry name" value="IspD"/>
    <property type="match status" value="1"/>
</dbReference>
<dbReference type="InterPro" id="IPR001228">
    <property type="entry name" value="IspD"/>
</dbReference>
<dbReference type="InterPro" id="IPR034683">
    <property type="entry name" value="IspD/TarI"/>
</dbReference>
<dbReference type="InterPro" id="IPR050088">
    <property type="entry name" value="IspD/TarI_cytidylyltransf_bact"/>
</dbReference>
<dbReference type="InterPro" id="IPR018294">
    <property type="entry name" value="ISPD_synthase_CS"/>
</dbReference>
<dbReference type="InterPro" id="IPR029044">
    <property type="entry name" value="Nucleotide-diphossugar_trans"/>
</dbReference>
<dbReference type="NCBIfam" id="TIGR00453">
    <property type="entry name" value="ispD"/>
    <property type="match status" value="1"/>
</dbReference>
<dbReference type="PANTHER" id="PTHR32125">
    <property type="entry name" value="2-C-METHYL-D-ERYTHRITOL 4-PHOSPHATE CYTIDYLYLTRANSFERASE, CHLOROPLASTIC"/>
    <property type="match status" value="1"/>
</dbReference>
<dbReference type="PANTHER" id="PTHR32125:SF4">
    <property type="entry name" value="2-C-METHYL-D-ERYTHRITOL 4-PHOSPHATE CYTIDYLYLTRANSFERASE, CHLOROPLASTIC"/>
    <property type="match status" value="1"/>
</dbReference>
<dbReference type="Pfam" id="PF01128">
    <property type="entry name" value="IspD"/>
    <property type="match status" value="1"/>
</dbReference>
<dbReference type="SUPFAM" id="SSF53448">
    <property type="entry name" value="Nucleotide-diphospho-sugar transferases"/>
    <property type="match status" value="1"/>
</dbReference>
<dbReference type="PROSITE" id="PS01295">
    <property type="entry name" value="ISPD"/>
    <property type="match status" value="1"/>
</dbReference>
<evidence type="ECO:0000255" key="1">
    <source>
        <dbReference type="HAMAP-Rule" id="MF_00108"/>
    </source>
</evidence>
<proteinExistence type="inferred from homology"/>
<gene>
    <name evidence="1" type="primary">ispD</name>
    <name type="ordered locus">YPTS_0804</name>
</gene>